<organismHost>
    <name type="scientific">Anas</name>
    <name type="common">ducks</name>
    <dbReference type="NCBI Taxonomy" id="8835"/>
</organismHost>
<feature type="chain" id="PRO_0000324346" description="Capsid protein">
    <location>
        <begin position="1"/>
        <end position="262"/>
    </location>
</feature>
<feature type="region of interest" description="Disordered" evidence="4">
    <location>
        <begin position="183"/>
        <end position="262"/>
    </location>
</feature>
<feature type="region of interest" description="RNA binding" evidence="1">
    <location>
        <begin position="254"/>
        <end position="260"/>
    </location>
</feature>
<feature type="short sequence motif" description="Bipartite nuclear localization signal" evidence="3">
    <location>
        <begin position="215"/>
        <end position="233"/>
    </location>
</feature>
<feature type="compositionally biased region" description="Basic residues" evidence="4">
    <location>
        <begin position="215"/>
        <end position="234"/>
    </location>
</feature>
<feature type="compositionally biased region" description="Basic residues" evidence="4">
    <location>
        <begin position="252"/>
        <end position="262"/>
    </location>
</feature>
<feature type="modified residue" description="Phosphoserine; by host" evidence="1">
    <location>
        <position position="232"/>
    </location>
</feature>
<feature type="modified residue" description="Phosphoserine; by host" evidence="1">
    <location>
        <position position="239"/>
    </location>
</feature>
<feature type="modified residue" description="Phosphoserine; by host" evidence="1">
    <location>
        <position position="245"/>
    </location>
</feature>
<name>CAPSD_HPBDB</name>
<dbReference type="EMBL" id="M32990">
    <property type="status" value="NOT_ANNOTATED_CDS"/>
    <property type="molecule type" value="Genomic_DNA"/>
</dbReference>
<dbReference type="SMR" id="P0C6K3"/>
<dbReference type="Proteomes" id="UP000008682">
    <property type="component" value="Genome"/>
</dbReference>
<dbReference type="GO" id="GO:0043657">
    <property type="term" value="C:host cell"/>
    <property type="evidence" value="ECO:0007669"/>
    <property type="project" value="GOC"/>
</dbReference>
<dbReference type="GO" id="GO:0030430">
    <property type="term" value="C:host cell cytoplasm"/>
    <property type="evidence" value="ECO:0007669"/>
    <property type="project" value="UniProtKB-SubCell"/>
</dbReference>
<dbReference type="GO" id="GO:0039619">
    <property type="term" value="C:T=4 icosahedral viral capsid"/>
    <property type="evidence" value="ECO:0007669"/>
    <property type="project" value="UniProtKB-KW"/>
</dbReference>
<dbReference type="GO" id="GO:0003677">
    <property type="term" value="F:DNA binding"/>
    <property type="evidence" value="ECO:0007669"/>
    <property type="project" value="UniProtKB-KW"/>
</dbReference>
<dbReference type="GO" id="GO:0003723">
    <property type="term" value="F:RNA binding"/>
    <property type="evidence" value="ECO:0007669"/>
    <property type="project" value="UniProtKB-KW"/>
</dbReference>
<dbReference type="GO" id="GO:0005198">
    <property type="term" value="F:structural molecule activity"/>
    <property type="evidence" value="ECO:0007669"/>
    <property type="project" value="InterPro"/>
</dbReference>
<dbReference type="GO" id="GO:0075521">
    <property type="term" value="P:microtubule-dependent intracellular transport of viral material towards nucleus"/>
    <property type="evidence" value="ECO:0007669"/>
    <property type="project" value="UniProtKB-KW"/>
</dbReference>
<dbReference type="GO" id="GO:0046718">
    <property type="term" value="P:symbiont entry into host cell"/>
    <property type="evidence" value="ECO:0007669"/>
    <property type="project" value="UniProtKB-KW"/>
</dbReference>
<dbReference type="GO" id="GO:0075732">
    <property type="term" value="P:viral penetration into host nucleus"/>
    <property type="evidence" value="ECO:0007669"/>
    <property type="project" value="UniProtKB-KW"/>
</dbReference>
<dbReference type="Gene3D" id="1.10.4090.10">
    <property type="entry name" value="Viral capsid, core domain supefamily, Hepatitis B virus"/>
    <property type="match status" value="2"/>
</dbReference>
<dbReference type="InterPro" id="IPR002006">
    <property type="entry name" value="Hepatitis_core"/>
</dbReference>
<dbReference type="InterPro" id="IPR036459">
    <property type="entry name" value="Viral_capsid_core_dom_sf_HBV"/>
</dbReference>
<dbReference type="Pfam" id="PF00906">
    <property type="entry name" value="Hepatitis_core"/>
    <property type="match status" value="1"/>
</dbReference>
<dbReference type="SUPFAM" id="SSF47852">
    <property type="entry name" value="Hepatitis B viral capsid (hbcag)"/>
    <property type="match status" value="1"/>
</dbReference>
<organism>
    <name type="scientific">Duck hepatitis B virus (isolate brown Shanghai duck S5)</name>
    <name type="common">DHBV</name>
    <dbReference type="NCBI Taxonomy" id="10439"/>
    <lineage>
        <taxon>Viruses</taxon>
        <taxon>Riboviria</taxon>
        <taxon>Pararnavirae</taxon>
        <taxon>Artverviricota</taxon>
        <taxon>Revtraviricetes</taxon>
        <taxon>Blubervirales</taxon>
        <taxon>Hepadnaviridae</taxon>
        <taxon>Avihepadnavirus</taxon>
        <taxon>Duck hepatitis B virus</taxon>
    </lineage>
</organism>
<sequence>MDINASRALANVYDLPDDFFPKIDDLVRDAKDALEPYWKSDSIKKHVLIATHFVDLIEDFWQTTQGMHEIAESLRAVIPPTTAPVPTGYLIQHEEAEEIPLGDLFKHQEERIVSFQPDYPITARIHAHLKAYAKINEESLDRARRLLWWHYNCLLWGEANVTNYISRLRTWLSTPEKYRGRDAPTIEAITRPIQVAQGGRKTSSGTRKPRGLEPRRRKVKTTVVYGRRRSKSRDRRAPSPQRAGSPLPRSSSSHHRSPSPRK</sequence>
<keyword id="KW-0024">Alternative initiation</keyword>
<keyword id="KW-0167">Capsid protein</keyword>
<keyword id="KW-1176">Cytoplasmic inwards viral transport</keyword>
<keyword id="KW-0238">DNA-binding</keyword>
<keyword id="KW-1035">Host cytoplasm</keyword>
<keyword id="KW-0945">Host-virus interaction</keyword>
<keyword id="KW-1177">Microtubular inwards viral transport</keyword>
<keyword id="KW-0597">Phosphoprotein</keyword>
<keyword id="KW-0694">RNA-binding</keyword>
<keyword id="KW-1144">T=4 icosahedral capsid protein</keyword>
<keyword id="KW-1163">Viral penetration into host nucleus</keyword>
<keyword id="KW-0946">Virion</keyword>
<keyword id="KW-1160">Virus entry into host cell</keyword>
<accession>P0C6K3</accession>
<protein>
    <recommendedName>
        <fullName>Capsid protein</fullName>
    </recommendedName>
    <alternativeName>
        <fullName>Core antigen</fullName>
    </alternativeName>
    <alternativeName>
        <fullName>Core protein</fullName>
    </alternativeName>
    <alternativeName>
        <fullName>HBcAg</fullName>
    </alternativeName>
</protein>
<proteinExistence type="inferred from homology"/>
<evidence type="ECO:0000250" key="1"/>
<evidence type="ECO:0000250" key="2">
    <source>
        <dbReference type="UniProtKB" id="P03148"/>
    </source>
</evidence>
<evidence type="ECO:0000255" key="3"/>
<evidence type="ECO:0000256" key="4">
    <source>
        <dbReference type="SAM" id="MobiDB-lite"/>
    </source>
</evidence>
<evidence type="ECO:0000305" key="5"/>
<comment type="function">
    <text evidence="1">Self assembles to form an icosahedral capsid. Most capsid appear to be large particles with an icosahedral symmetry of T=4 and consist of 240 copies of capsid protein, though a fraction forms smaller T=3 particles consisting of 180 capsid proteins. Entering capsid are transported along microtubules to the nucleus. Phosphorylation of the capsid is thought to induce exposure of nuclear localization signal in the C-terminal portion of the capsid protein that allows binding to the nuclear pore complex via the importin (karyopherin-) alpha and beta. Capsids are imported in intact form through the nuclear pore into the nuclear basket, where it probably binds NUP153. Only capsids that contain the mature viral genome can release the viral DNA and capsid protein into the nucleoplasm. Immature capsids get stucked in the basket. Capsids encapsulate the pre-genomic RNA and the P protein. Pre-genomic RNA is reverse transcribed into DNA while the capsid is still in the cytoplasm. The capsid can then either be directed to the nucleus, providing more genome for transcription, or bud through the endoplasmic reticulum to provide new virions (By similarity).</text>
</comment>
<comment type="subunit">
    <text evidence="1">Homodimerizes, then multimerizes.</text>
</comment>
<comment type="subcellular location">
    <molecule>Capsid protein</molecule>
    <subcellularLocation>
        <location evidence="2">Virion</location>
    </subcellularLocation>
    <subcellularLocation>
        <location evidence="2">Host cytoplasm</location>
    </subcellularLocation>
</comment>
<comment type="alternative products">
    <event type="alternative initiation"/>
    <isoform>
        <id>P0C6K3-1</id>
        <name>Capsid protein</name>
        <sequence type="displayed"/>
    </isoform>
    <isoform>
        <id>P17190-1</id>
        <name>External core antigen</name>
        <sequence type="external"/>
    </isoform>
</comment>
<comment type="similarity">
    <text evidence="5">Belongs to the avihepadnavirus core antigen family.</text>
</comment>
<reference key="1">
    <citation type="journal article" date="1989" name="Virology">
        <title>Molecular cloning and sequence analysis of duck hepatitis B virus genomes of a new variant isolated from Shanghai ducks.</title>
        <authorList>
            <person name="Uchida M."/>
            <person name="Esumi M."/>
            <person name="Shikata T."/>
        </authorList>
    </citation>
    <scope>NUCLEOTIDE SEQUENCE [GENOMIC DNA]</scope>
</reference>
<gene>
    <name type="primary">C</name>
</gene>